<evidence type="ECO:0000255" key="1">
    <source>
        <dbReference type="HAMAP-Rule" id="MF_01574"/>
    </source>
</evidence>
<proteinExistence type="inferred from homology"/>
<gene>
    <name evidence="1" type="primary">lacG</name>
    <name type="ordered locus">SERP1789</name>
</gene>
<dbReference type="EC" id="3.2.1.85" evidence="1"/>
<dbReference type="EMBL" id="CP000029">
    <property type="protein sequence ID" value="AAW55165.1"/>
    <property type="molecule type" value="Genomic_DNA"/>
</dbReference>
<dbReference type="RefSeq" id="WP_001832731.1">
    <property type="nucleotide sequence ID" value="NC_002976.3"/>
</dbReference>
<dbReference type="SMR" id="Q5HM41"/>
<dbReference type="STRING" id="176279.SERP1789"/>
<dbReference type="CAZy" id="GH1">
    <property type="family name" value="Glycoside Hydrolase Family 1"/>
</dbReference>
<dbReference type="GeneID" id="50018115"/>
<dbReference type="KEGG" id="ser:SERP1789"/>
<dbReference type="eggNOG" id="COG2723">
    <property type="taxonomic scope" value="Bacteria"/>
</dbReference>
<dbReference type="HOGENOM" id="CLU_001859_1_3_9"/>
<dbReference type="UniPathway" id="UPA00542">
    <property type="reaction ID" value="UER00605"/>
</dbReference>
<dbReference type="Proteomes" id="UP000000531">
    <property type="component" value="Chromosome"/>
</dbReference>
<dbReference type="GO" id="GO:0005829">
    <property type="term" value="C:cytosol"/>
    <property type="evidence" value="ECO:0007669"/>
    <property type="project" value="TreeGrafter"/>
</dbReference>
<dbReference type="GO" id="GO:0033920">
    <property type="term" value="F:6-phospho-beta-galactosidase activity"/>
    <property type="evidence" value="ECO:0007669"/>
    <property type="project" value="UniProtKB-UniRule"/>
</dbReference>
<dbReference type="GO" id="GO:0008422">
    <property type="term" value="F:beta-glucosidase activity"/>
    <property type="evidence" value="ECO:0007669"/>
    <property type="project" value="TreeGrafter"/>
</dbReference>
<dbReference type="GO" id="GO:0019512">
    <property type="term" value="P:lactose catabolic process via tagatose-6-phosphate"/>
    <property type="evidence" value="ECO:0007669"/>
    <property type="project" value="InterPro"/>
</dbReference>
<dbReference type="FunFam" id="3.20.20.80:FF:000004">
    <property type="entry name" value="Beta-glucosidase 6-phospho-beta-glucosidase"/>
    <property type="match status" value="1"/>
</dbReference>
<dbReference type="Gene3D" id="3.20.20.80">
    <property type="entry name" value="Glycosidases"/>
    <property type="match status" value="1"/>
</dbReference>
<dbReference type="HAMAP" id="MF_01574">
    <property type="entry name" value="LacG"/>
    <property type="match status" value="1"/>
</dbReference>
<dbReference type="InterPro" id="IPR005928">
    <property type="entry name" value="6P-beta-galactosidase"/>
</dbReference>
<dbReference type="InterPro" id="IPR001360">
    <property type="entry name" value="Glyco_hydro_1"/>
</dbReference>
<dbReference type="InterPro" id="IPR018120">
    <property type="entry name" value="Glyco_hydro_1_AS"/>
</dbReference>
<dbReference type="InterPro" id="IPR033132">
    <property type="entry name" value="Glyco_hydro_1_N_CS"/>
</dbReference>
<dbReference type="InterPro" id="IPR017853">
    <property type="entry name" value="Glycoside_hydrolase_SF"/>
</dbReference>
<dbReference type="NCBIfam" id="TIGR01233">
    <property type="entry name" value="lacG"/>
    <property type="match status" value="1"/>
</dbReference>
<dbReference type="NCBIfam" id="NF010036">
    <property type="entry name" value="PRK13511.1"/>
    <property type="match status" value="1"/>
</dbReference>
<dbReference type="PANTHER" id="PTHR10353">
    <property type="entry name" value="GLYCOSYL HYDROLASE"/>
    <property type="match status" value="1"/>
</dbReference>
<dbReference type="PANTHER" id="PTHR10353:SF36">
    <property type="entry name" value="LP05116P"/>
    <property type="match status" value="1"/>
</dbReference>
<dbReference type="Pfam" id="PF00232">
    <property type="entry name" value="Glyco_hydro_1"/>
    <property type="match status" value="1"/>
</dbReference>
<dbReference type="PRINTS" id="PR00131">
    <property type="entry name" value="GLHYDRLASE1"/>
</dbReference>
<dbReference type="SUPFAM" id="SSF51445">
    <property type="entry name" value="(Trans)glycosidases"/>
    <property type="match status" value="1"/>
</dbReference>
<dbReference type="PROSITE" id="PS00572">
    <property type="entry name" value="GLYCOSYL_HYDROL_F1_1"/>
    <property type="match status" value="1"/>
</dbReference>
<dbReference type="PROSITE" id="PS00653">
    <property type="entry name" value="GLYCOSYL_HYDROL_F1_2"/>
    <property type="match status" value="1"/>
</dbReference>
<accession>Q5HM41</accession>
<comment type="catalytic activity">
    <reaction evidence="1">
        <text>a 6-phospho-beta-D-galactoside + H2O = D-galactose 6-phosphate + an alcohol</text>
        <dbReference type="Rhea" id="RHEA:24568"/>
        <dbReference type="ChEBI" id="CHEBI:15377"/>
        <dbReference type="ChEBI" id="CHEBI:30879"/>
        <dbReference type="ChEBI" id="CHEBI:58534"/>
        <dbReference type="ChEBI" id="CHEBI:91004"/>
        <dbReference type="EC" id="3.2.1.85"/>
    </reaction>
</comment>
<comment type="pathway">
    <text evidence="1">Carbohydrate metabolism; lactose degradation; D-galactose 6-phosphate and beta-D-glucose from lactose 6-phosphate: step 1/1.</text>
</comment>
<comment type="similarity">
    <text evidence="1">Belongs to the glycosyl hydrolase 1 family.</text>
</comment>
<organism>
    <name type="scientific">Staphylococcus epidermidis (strain ATCC 35984 / DSM 28319 / BCRC 17069 / CCUG 31568 / BM 3577 / RP62A)</name>
    <dbReference type="NCBI Taxonomy" id="176279"/>
    <lineage>
        <taxon>Bacteria</taxon>
        <taxon>Bacillati</taxon>
        <taxon>Bacillota</taxon>
        <taxon>Bacilli</taxon>
        <taxon>Bacillales</taxon>
        <taxon>Staphylococcaceae</taxon>
        <taxon>Staphylococcus</taxon>
    </lineage>
</organism>
<protein>
    <recommendedName>
        <fullName evidence="1">6-phospho-beta-galactosidase</fullName>
        <ecNumber evidence="1">3.2.1.85</ecNumber>
    </recommendedName>
    <alternativeName>
        <fullName evidence="1">Beta-D-phosphogalactoside galactohydrolase</fullName>
        <shortName evidence="1">PGALase</shortName>
    </alternativeName>
    <alternativeName>
        <fullName evidence="1">P-beta-Gal</fullName>
        <shortName evidence="1">PBG</shortName>
    </alternativeName>
</protein>
<sequence length="470" mass="54836">MTKKLPDDFIFGGATAAYQAEGATQTDGKGRVAWDTYLEENYWYTAEPASDFYNRYPVDLELSERFGVNGIRISIAWSRIFPKGYGEVNQKGVEYYHNLFKECHKRHVEPFVTLHHFDTPEVLHKDGDFLNRKTIDYFVDYAEFCFKEFPEVKYWTTFNEIGPIGDGQYLVGKFPPGIKYDFEKVFQSHHNMMVAHARAVKLFKDENYKGEIGVVHALPTKYPYDPSNPEDVRAAELEDIIHNKFILDATYLGKYSRETMEGVQHILSVNGGQLEISDEDYKILDEAKDLNDFLGINYYMSDWMRGFEGESEITHNATGDKGGSKYQLKGVGQREFDVDVPRTDWDWMIYPQGLYDQIMRVVKDYPNYHKIYITENGLGYKDVFDEKEKTVHDDARIDYIKQHLSVIADAIADGANVKGYFLWSLMDVFSWSNGYEKRYGLFYVDFETQERFPKKSAYWYKELAESKEIK</sequence>
<reference key="1">
    <citation type="journal article" date="2005" name="J. Bacteriol.">
        <title>Insights on evolution of virulence and resistance from the complete genome analysis of an early methicillin-resistant Staphylococcus aureus strain and a biofilm-producing methicillin-resistant Staphylococcus epidermidis strain.</title>
        <authorList>
            <person name="Gill S.R."/>
            <person name="Fouts D.E."/>
            <person name="Archer G.L."/>
            <person name="Mongodin E.F."/>
            <person name="DeBoy R.T."/>
            <person name="Ravel J."/>
            <person name="Paulsen I.T."/>
            <person name="Kolonay J.F."/>
            <person name="Brinkac L.M."/>
            <person name="Beanan M.J."/>
            <person name="Dodson R.J."/>
            <person name="Daugherty S.C."/>
            <person name="Madupu R."/>
            <person name="Angiuoli S.V."/>
            <person name="Durkin A.S."/>
            <person name="Haft D.H."/>
            <person name="Vamathevan J.J."/>
            <person name="Khouri H."/>
            <person name="Utterback T.R."/>
            <person name="Lee C."/>
            <person name="Dimitrov G."/>
            <person name="Jiang L."/>
            <person name="Qin H."/>
            <person name="Weidman J."/>
            <person name="Tran K."/>
            <person name="Kang K.H."/>
            <person name="Hance I.R."/>
            <person name="Nelson K.E."/>
            <person name="Fraser C.M."/>
        </authorList>
    </citation>
    <scope>NUCLEOTIDE SEQUENCE [LARGE SCALE GENOMIC DNA]</scope>
    <source>
        <strain>ATCC 35984 / DSM 28319 / BCRC 17069 / CCUG 31568 / BM 3577 / RP62A</strain>
    </source>
</reference>
<keyword id="KW-0326">Glycosidase</keyword>
<keyword id="KW-0378">Hydrolase</keyword>
<keyword id="KW-1185">Reference proteome</keyword>
<feature type="chain" id="PRO_0000063892" description="6-phospho-beta-galactosidase">
    <location>
        <begin position="1"/>
        <end position="470"/>
    </location>
</feature>
<feature type="active site" description="Proton donor" evidence="1">
    <location>
        <position position="160"/>
    </location>
</feature>
<feature type="active site" description="Nucleophile" evidence="1">
    <location>
        <position position="375"/>
    </location>
</feature>
<feature type="binding site" evidence="1">
    <location>
        <position position="19"/>
    </location>
    <ligand>
        <name>D-galactose 6-phosphate</name>
        <dbReference type="ChEBI" id="CHEBI:91004"/>
    </ligand>
</feature>
<feature type="binding site" evidence="1">
    <location>
        <position position="116"/>
    </location>
    <ligand>
        <name>D-galactose 6-phosphate</name>
        <dbReference type="ChEBI" id="CHEBI:91004"/>
    </ligand>
</feature>
<feature type="binding site" evidence="1">
    <location>
        <position position="159"/>
    </location>
    <ligand>
        <name>D-galactose 6-phosphate</name>
        <dbReference type="ChEBI" id="CHEBI:91004"/>
    </ligand>
</feature>
<feature type="binding site" evidence="1">
    <location>
        <position position="160"/>
    </location>
    <ligand>
        <name>D-galactose 6-phosphate</name>
        <dbReference type="ChEBI" id="CHEBI:91004"/>
    </ligand>
</feature>
<feature type="binding site" evidence="1">
    <location>
        <position position="297"/>
    </location>
    <ligand>
        <name>D-galactose 6-phosphate</name>
        <dbReference type="ChEBI" id="CHEBI:91004"/>
    </ligand>
</feature>
<feature type="binding site" evidence="1">
    <location>
        <position position="430"/>
    </location>
    <ligand>
        <name>D-galactose 6-phosphate</name>
        <dbReference type="ChEBI" id="CHEBI:91004"/>
    </ligand>
</feature>
<feature type="binding site" evidence="1">
    <location>
        <position position="431"/>
    </location>
    <ligand>
        <name>D-galactose 6-phosphate</name>
        <dbReference type="ChEBI" id="CHEBI:91004"/>
    </ligand>
</feature>
<feature type="binding site" evidence="1">
    <location>
        <position position="437"/>
    </location>
    <ligand>
        <name>D-galactose 6-phosphate</name>
        <dbReference type="ChEBI" id="CHEBI:91004"/>
    </ligand>
</feature>
<feature type="binding site" evidence="1">
    <location>
        <position position="439"/>
    </location>
    <ligand>
        <name>D-galactose 6-phosphate</name>
        <dbReference type="ChEBI" id="CHEBI:91004"/>
    </ligand>
</feature>
<name>LACG_STAEQ</name>